<name>RLMM_ECO81</name>
<keyword id="KW-0963">Cytoplasm</keyword>
<keyword id="KW-0489">Methyltransferase</keyword>
<keyword id="KW-0698">rRNA processing</keyword>
<keyword id="KW-0949">S-adenosyl-L-methionine</keyword>
<keyword id="KW-0808">Transferase</keyword>
<protein>
    <recommendedName>
        <fullName evidence="1">Ribosomal RNA large subunit methyltransferase M</fullName>
        <ecNumber evidence="1">2.1.1.186</ecNumber>
    </recommendedName>
    <alternativeName>
        <fullName evidence="1">23S rRNA (cytidine2498-2'-O)-methyltransferase</fullName>
    </alternativeName>
    <alternativeName>
        <fullName evidence="1">23S rRNA 2'-O-ribose methyltransferase RlmM</fullName>
    </alternativeName>
</protein>
<reference key="1">
    <citation type="journal article" date="2009" name="PLoS Genet.">
        <title>Organised genome dynamics in the Escherichia coli species results in highly diverse adaptive paths.</title>
        <authorList>
            <person name="Touchon M."/>
            <person name="Hoede C."/>
            <person name="Tenaillon O."/>
            <person name="Barbe V."/>
            <person name="Baeriswyl S."/>
            <person name="Bidet P."/>
            <person name="Bingen E."/>
            <person name="Bonacorsi S."/>
            <person name="Bouchier C."/>
            <person name="Bouvet O."/>
            <person name="Calteau A."/>
            <person name="Chiapello H."/>
            <person name="Clermont O."/>
            <person name="Cruveiller S."/>
            <person name="Danchin A."/>
            <person name="Diard M."/>
            <person name="Dossat C."/>
            <person name="Karoui M.E."/>
            <person name="Frapy E."/>
            <person name="Garry L."/>
            <person name="Ghigo J.M."/>
            <person name="Gilles A.M."/>
            <person name="Johnson J."/>
            <person name="Le Bouguenec C."/>
            <person name="Lescat M."/>
            <person name="Mangenot S."/>
            <person name="Martinez-Jehanne V."/>
            <person name="Matic I."/>
            <person name="Nassif X."/>
            <person name="Oztas S."/>
            <person name="Petit M.A."/>
            <person name="Pichon C."/>
            <person name="Rouy Z."/>
            <person name="Ruf C.S."/>
            <person name="Schneider D."/>
            <person name="Tourret J."/>
            <person name="Vacherie B."/>
            <person name="Vallenet D."/>
            <person name="Medigue C."/>
            <person name="Rocha E.P.C."/>
            <person name="Denamur E."/>
        </authorList>
    </citation>
    <scope>NUCLEOTIDE SEQUENCE [LARGE SCALE GENOMIC DNA]</scope>
    <source>
        <strain>ED1a</strain>
    </source>
</reference>
<feature type="chain" id="PRO_1000185320" description="Ribosomal RNA large subunit methyltransferase M">
    <location>
        <begin position="1"/>
        <end position="366"/>
    </location>
</feature>
<feature type="active site" description="Proton acceptor" evidence="1">
    <location>
        <position position="306"/>
    </location>
</feature>
<feature type="binding site" evidence="1">
    <location>
        <position position="188"/>
    </location>
    <ligand>
        <name>S-adenosyl-L-methionine</name>
        <dbReference type="ChEBI" id="CHEBI:59789"/>
    </ligand>
</feature>
<feature type="binding site" evidence="1">
    <location>
        <begin position="221"/>
        <end position="224"/>
    </location>
    <ligand>
        <name>S-adenosyl-L-methionine</name>
        <dbReference type="ChEBI" id="CHEBI:59789"/>
    </ligand>
</feature>
<feature type="binding site" evidence="1">
    <location>
        <position position="240"/>
    </location>
    <ligand>
        <name>S-adenosyl-L-methionine</name>
        <dbReference type="ChEBI" id="CHEBI:59789"/>
    </ligand>
</feature>
<feature type="binding site" evidence="1">
    <location>
        <position position="260"/>
    </location>
    <ligand>
        <name>S-adenosyl-L-methionine</name>
        <dbReference type="ChEBI" id="CHEBI:59789"/>
    </ligand>
</feature>
<feature type="binding site" evidence="1">
    <location>
        <position position="277"/>
    </location>
    <ligand>
        <name>S-adenosyl-L-methionine</name>
        <dbReference type="ChEBI" id="CHEBI:59789"/>
    </ligand>
</feature>
<comment type="function">
    <text evidence="1">Catalyzes the 2'-O-methylation at nucleotide C2498 in 23S rRNA.</text>
</comment>
<comment type="catalytic activity">
    <reaction evidence="1">
        <text>cytidine(2498) in 23S rRNA + S-adenosyl-L-methionine = 2'-O-methylcytidine(2498) in 23S rRNA + S-adenosyl-L-homocysteine + H(+)</text>
        <dbReference type="Rhea" id="RHEA:42788"/>
        <dbReference type="Rhea" id="RHEA-COMP:10244"/>
        <dbReference type="Rhea" id="RHEA-COMP:10245"/>
        <dbReference type="ChEBI" id="CHEBI:15378"/>
        <dbReference type="ChEBI" id="CHEBI:57856"/>
        <dbReference type="ChEBI" id="CHEBI:59789"/>
        <dbReference type="ChEBI" id="CHEBI:74495"/>
        <dbReference type="ChEBI" id="CHEBI:82748"/>
        <dbReference type="EC" id="2.1.1.186"/>
    </reaction>
</comment>
<comment type="subunit">
    <text evidence="1">Monomer.</text>
</comment>
<comment type="subcellular location">
    <subcellularLocation>
        <location evidence="1">Cytoplasm</location>
    </subcellularLocation>
</comment>
<comment type="similarity">
    <text evidence="1">Belongs to the class I-like SAM-binding methyltransferase superfamily. RNA methyltransferase RlmE family. RlmM subfamily.</text>
</comment>
<proteinExistence type="inferred from homology"/>
<accession>B7MYV7</accession>
<organism>
    <name type="scientific">Escherichia coli O81 (strain ED1a)</name>
    <dbReference type="NCBI Taxonomy" id="585397"/>
    <lineage>
        <taxon>Bacteria</taxon>
        <taxon>Pseudomonadati</taxon>
        <taxon>Pseudomonadota</taxon>
        <taxon>Gammaproteobacteria</taxon>
        <taxon>Enterobacterales</taxon>
        <taxon>Enterobacteriaceae</taxon>
        <taxon>Escherichia</taxon>
    </lineage>
</organism>
<evidence type="ECO:0000255" key="1">
    <source>
        <dbReference type="HAMAP-Rule" id="MF_01551"/>
    </source>
</evidence>
<dbReference type="EC" id="2.1.1.186" evidence="1"/>
<dbReference type="EMBL" id="CU928162">
    <property type="protein sequence ID" value="CAR09274.1"/>
    <property type="molecule type" value="Genomic_DNA"/>
</dbReference>
<dbReference type="RefSeq" id="WP_001045530.1">
    <property type="nucleotide sequence ID" value="NC_011745.1"/>
</dbReference>
<dbReference type="SMR" id="B7MYV7"/>
<dbReference type="KEGG" id="ecq:ECED1_3259"/>
<dbReference type="HOGENOM" id="CLU_043780_0_0_6"/>
<dbReference type="Proteomes" id="UP000000748">
    <property type="component" value="Chromosome"/>
</dbReference>
<dbReference type="GO" id="GO:0005737">
    <property type="term" value="C:cytoplasm"/>
    <property type="evidence" value="ECO:0007669"/>
    <property type="project" value="UniProtKB-SubCell"/>
</dbReference>
<dbReference type="GO" id="GO:0008757">
    <property type="term" value="F:S-adenosylmethionine-dependent methyltransferase activity"/>
    <property type="evidence" value="ECO:0007669"/>
    <property type="project" value="UniProtKB-UniRule"/>
</dbReference>
<dbReference type="GO" id="GO:0032259">
    <property type="term" value="P:methylation"/>
    <property type="evidence" value="ECO:0007669"/>
    <property type="project" value="UniProtKB-KW"/>
</dbReference>
<dbReference type="GO" id="GO:0006364">
    <property type="term" value="P:rRNA processing"/>
    <property type="evidence" value="ECO:0007669"/>
    <property type="project" value="UniProtKB-UniRule"/>
</dbReference>
<dbReference type="FunFam" id="3.30.2300.20:FF:000001">
    <property type="entry name" value="Ribosomal RNA large subunit methyltransferase M"/>
    <property type="match status" value="1"/>
</dbReference>
<dbReference type="FunFam" id="3.30.70.2810:FF:000001">
    <property type="entry name" value="Ribosomal RNA large subunit methyltransferase M"/>
    <property type="match status" value="1"/>
</dbReference>
<dbReference type="FunFam" id="3.40.50.150:FF:000020">
    <property type="entry name" value="Ribosomal RNA large subunit methyltransferase M"/>
    <property type="match status" value="1"/>
</dbReference>
<dbReference type="Gene3D" id="3.30.2300.20">
    <property type="match status" value="1"/>
</dbReference>
<dbReference type="Gene3D" id="3.30.70.2810">
    <property type="match status" value="1"/>
</dbReference>
<dbReference type="Gene3D" id="3.40.50.150">
    <property type="entry name" value="Vaccinia Virus protein VP39"/>
    <property type="match status" value="1"/>
</dbReference>
<dbReference type="HAMAP" id="MF_01551">
    <property type="entry name" value="23SrRNA_methyltr_M"/>
    <property type="match status" value="1"/>
</dbReference>
<dbReference type="InterPro" id="IPR040739">
    <property type="entry name" value="RlmM_FDX"/>
</dbReference>
<dbReference type="InterPro" id="IPR048646">
    <property type="entry name" value="RlmM_THUMP-like"/>
</dbReference>
<dbReference type="InterPro" id="IPR002877">
    <property type="entry name" value="RNA_MeTrfase_FtsJ_dom"/>
</dbReference>
<dbReference type="InterPro" id="IPR011224">
    <property type="entry name" value="rRNA_MeTrfase_M"/>
</dbReference>
<dbReference type="InterPro" id="IPR029063">
    <property type="entry name" value="SAM-dependent_MTases_sf"/>
</dbReference>
<dbReference type="NCBIfam" id="NF008734">
    <property type="entry name" value="PRK11760.1"/>
    <property type="match status" value="1"/>
</dbReference>
<dbReference type="PANTHER" id="PTHR37524">
    <property type="entry name" value="RIBOSOMAL RNA LARGE SUBUNIT METHYLTRANSFERASE M"/>
    <property type="match status" value="1"/>
</dbReference>
<dbReference type="PANTHER" id="PTHR37524:SF2">
    <property type="entry name" value="RIBOSOMAL RNA METHYLTRANSFERASE FTSJ DOMAIN-CONTAINING PROTEIN"/>
    <property type="match status" value="1"/>
</dbReference>
<dbReference type="Pfam" id="PF01728">
    <property type="entry name" value="FtsJ"/>
    <property type="match status" value="1"/>
</dbReference>
<dbReference type="Pfam" id="PF18125">
    <property type="entry name" value="RlmM_FDX"/>
    <property type="match status" value="1"/>
</dbReference>
<dbReference type="Pfam" id="PF21239">
    <property type="entry name" value="RLMM_N"/>
    <property type="match status" value="1"/>
</dbReference>
<dbReference type="PIRSF" id="PIRSF028774">
    <property type="entry name" value="UCP028774"/>
    <property type="match status" value="1"/>
</dbReference>
<dbReference type="SUPFAM" id="SSF53335">
    <property type="entry name" value="S-adenosyl-L-methionine-dependent methyltransferases"/>
    <property type="match status" value="1"/>
</dbReference>
<sequence length="366" mass="41878">MNKVVLLCRPGFEKECAAEITDKAGQREIFGFARVKENAGYVIYECYQPDDGDKLIRELPFSSLIFARQWFVVGELLQHLPPEDRITPIVGMLQGVVEKGGELRVEVADTNESKELLKFCRKFTVPLRAALRDAGVLANYETPKRPVVHVFFIAPGCCYTGYSYSSNNSPFYMGIPRLKFPADAPSRSTLKLEEAFHVFIPADEWDERLANGMWAVDLGACPGGWTYQLVKRNMWVYSVDNGPMAQSLMDTGQVTWLREDGFKFRPTRSNISWMVCDMVEKPAKVAALMAQWLVNGWCRETIFNLKLPMKKRYEEVSHNLAYIQAQLDEHGINAQIQARQLYHDREEVTVHVRRIWAAVGGRRDER</sequence>
<gene>
    <name evidence="1" type="primary">rlmM</name>
    <name type="ordered locus">ECED1_3259</name>
</gene>